<sequence length="483" mass="55907">MLTLDTLNVMLAVSEEGLIEEMIIALLASPQLAVFFEKFPRLKAAITDDVPRWREALRSRLKDARVPPELTEEVMCYQQSQLLSTPQFIVQLPQILDLLHRLNSPWAEQARQLVDANSTITSALHTLFLQRWRLSLIVQATTLNQQLLEEEREQLLSEVQERMTLSGQLEPILADNNTAAGRLWDMSAGQLKRGDYQLIVKYGEFLNEQPELKRLAEQLGRSREAKSIPRNDAQMETFRTMVREPATVPEQVDGLQQSDDILRLLPPELATLGITELEYEFYRRLVEKQLLTYRLHGESWREKVIERPVVHKDYDEQPRGPFIVCVDTSGSMGGFNEQCAKAFCLALMRIALAENRRCYIMLFSTEIVRYELSGPQGIEQAIRFLSQQFRGGTDLASCFRAIMERLQSREWFDADAVVISDFIAQRLPDDVTSKVKELQRVHQHRFHAVAMSAHGKPGIMRIFDHIWRFDTGMRSRLLRRWRR</sequence>
<accession>B5YY03</accession>
<reference key="1">
    <citation type="journal article" date="2011" name="Proc. Natl. Acad. Sci. U.S.A.">
        <title>Genomic anatomy of Escherichia coli O157:H7 outbreaks.</title>
        <authorList>
            <person name="Eppinger M."/>
            <person name="Mammel M.K."/>
            <person name="Leclerc J.E."/>
            <person name="Ravel J."/>
            <person name="Cebula T.A."/>
        </authorList>
    </citation>
    <scope>NUCLEOTIDE SEQUENCE [LARGE SCALE GENOMIC DNA]</scope>
    <source>
        <strain>EC4115 / EHEC</strain>
    </source>
</reference>
<feature type="chain" id="PRO_1000186143" description="Regulatory protein ViaA">
    <location>
        <begin position="1"/>
        <end position="483"/>
    </location>
</feature>
<gene>
    <name evidence="1" type="primary">viaA</name>
    <name type="ordered locus">ECH74115_5181</name>
</gene>
<proteinExistence type="inferred from homology"/>
<comment type="function">
    <text evidence="1">Component of the RavA-ViaA chaperone complex, which may act on the membrane to optimize the function of some of the respiratory chains. ViaA stimulates the ATPase activity of RavA.</text>
</comment>
<comment type="subunit">
    <text evidence="1">Homodimer. Interacts with RavA.</text>
</comment>
<comment type="subcellular location">
    <subcellularLocation>
        <location evidence="1">Cytoplasm</location>
    </subcellularLocation>
</comment>
<comment type="similarity">
    <text evidence="1">Belongs to the ViaA family.</text>
</comment>
<keyword id="KW-0143">Chaperone</keyword>
<keyword id="KW-0963">Cytoplasm</keyword>
<name>VIAA_ECO5E</name>
<evidence type="ECO:0000255" key="1">
    <source>
        <dbReference type="HAMAP-Rule" id="MF_01626"/>
    </source>
</evidence>
<organism>
    <name type="scientific">Escherichia coli O157:H7 (strain EC4115 / EHEC)</name>
    <dbReference type="NCBI Taxonomy" id="444450"/>
    <lineage>
        <taxon>Bacteria</taxon>
        <taxon>Pseudomonadati</taxon>
        <taxon>Pseudomonadota</taxon>
        <taxon>Gammaproteobacteria</taxon>
        <taxon>Enterobacterales</taxon>
        <taxon>Enterobacteriaceae</taxon>
        <taxon>Escherichia</taxon>
    </lineage>
</organism>
<protein>
    <recommendedName>
        <fullName evidence="1">Regulatory protein ViaA</fullName>
    </recommendedName>
    <alternativeName>
        <fullName evidence="1">VWA interacting with AAA+ ATPase</fullName>
    </alternativeName>
</protein>
<dbReference type="EMBL" id="CP001164">
    <property type="protein sequence ID" value="ACI36767.1"/>
    <property type="molecule type" value="Genomic_DNA"/>
</dbReference>
<dbReference type="RefSeq" id="WP_000956642.1">
    <property type="nucleotide sequence ID" value="NC_011353.1"/>
</dbReference>
<dbReference type="SMR" id="B5YY03"/>
<dbReference type="GeneID" id="93778222"/>
<dbReference type="KEGG" id="ecf:ECH74115_5181"/>
<dbReference type="HOGENOM" id="CLU_022130_0_0_6"/>
<dbReference type="GO" id="GO:0005829">
    <property type="term" value="C:cytosol"/>
    <property type="evidence" value="ECO:0007669"/>
    <property type="project" value="TreeGrafter"/>
</dbReference>
<dbReference type="CDD" id="cd01462">
    <property type="entry name" value="VWA_YIEM_type"/>
    <property type="match status" value="1"/>
</dbReference>
<dbReference type="Gene3D" id="3.40.50.410">
    <property type="entry name" value="von Willebrand factor, type A domain"/>
    <property type="match status" value="1"/>
</dbReference>
<dbReference type="HAMAP" id="MF_01626">
    <property type="entry name" value="ViaA"/>
    <property type="match status" value="1"/>
</dbReference>
<dbReference type="InterPro" id="IPR008912">
    <property type="entry name" value="Uncharacterised_CoxE"/>
</dbReference>
<dbReference type="InterPro" id="IPR023481">
    <property type="entry name" value="Uncharacterised_ViaA"/>
</dbReference>
<dbReference type="InterPro" id="IPR002035">
    <property type="entry name" value="VWF_A"/>
</dbReference>
<dbReference type="InterPro" id="IPR036465">
    <property type="entry name" value="vWFA_dom_sf"/>
</dbReference>
<dbReference type="NCBIfam" id="NF008230">
    <property type="entry name" value="PRK10997.1"/>
    <property type="match status" value="1"/>
</dbReference>
<dbReference type="PANTHER" id="PTHR36846">
    <property type="entry name" value="PROTEIN VIAA"/>
    <property type="match status" value="1"/>
</dbReference>
<dbReference type="PANTHER" id="PTHR36846:SF1">
    <property type="entry name" value="PROTEIN VIAA"/>
    <property type="match status" value="1"/>
</dbReference>
<dbReference type="Pfam" id="PF05762">
    <property type="entry name" value="VWA_CoxE"/>
    <property type="match status" value="1"/>
</dbReference>
<dbReference type="SMART" id="SM00327">
    <property type="entry name" value="VWA"/>
    <property type="match status" value="1"/>
</dbReference>
<dbReference type="SUPFAM" id="SSF53300">
    <property type="entry name" value="vWA-like"/>
    <property type="match status" value="1"/>
</dbReference>